<keyword id="KW-0002">3D-structure</keyword>
<keyword id="KW-0378">Hydrolase</keyword>
<keyword id="KW-0408">Iron</keyword>
<keyword id="KW-0479">Metal-binding</keyword>
<keyword id="KW-0648">Protein biosynthesis</keyword>
<keyword id="KW-1185">Reference proteome</keyword>
<accession>Q9I7A8</accession>
<feature type="chain" id="PRO_0000082819" description="Peptide deformylase">
    <location>
        <begin position="1"/>
        <end position="168"/>
    </location>
</feature>
<feature type="active site" evidence="1">
    <location>
        <position position="135"/>
    </location>
</feature>
<feature type="binding site" evidence="1">
    <location>
        <position position="92"/>
    </location>
    <ligand>
        <name>Fe cation</name>
        <dbReference type="ChEBI" id="CHEBI:24875"/>
    </ligand>
</feature>
<feature type="binding site" evidence="1">
    <location>
        <position position="134"/>
    </location>
    <ligand>
        <name>Fe cation</name>
        <dbReference type="ChEBI" id="CHEBI:24875"/>
    </ligand>
</feature>
<feature type="binding site" evidence="1">
    <location>
        <position position="138"/>
    </location>
    <ligand>
        <name>Fe cation</name>
        <dbReference type="ChEBI" id="CHEBI:24875"/>
    </ligand>
</feature>
<feature type="helix" evidence="3">
    <location>
        <begin position="12"/>
        <end position="15"/>
    </location>
</feature>
<feature type="helix" evidence="3">
    <location>
        <begin position="26"/>
        <end position="41"/>
    </location>
</feature>
<feature type="strand" evidence="3">
    <location>
        <begin position="45"/>
        <end position="48"/>
    </location>
</feature>
<feature type="helix" evidence="3">
    <location>
        <begin position="49"/>
        <end position="52"/>
    </location>
</feature>
<feature type="strand" evidence="3">
    <location>
        <begin position="56"/>
        <end position="62"/>
    </location>
</feature>
<feature type="strand" evidence="2">
    <location>
        <begin position="64"/>
        <end position="67"/>
    </location>
</feature>
<feature type="strand" evidence="3">
    <location>
        <begin position="70"/>
        <end position="81"/>
    </location>
</feature>
<feature type="strand" evidence="3">
    <location>
        <begin position="85"/>
        <end position="90"/>
    </location>
</feature>
<feature type="strand" evidence="3">
    <location>
        <begin position="100"/>
        <end position="106"/>
    </location>
</feature>
<feature type="strand" evidence="3">
    <location>
        <begin position="108"/>
        <end position="113"/>
    </location>
</feature>
<feature type="strand" evidence="3">
    <location>
        <begin position="119"/>
        <end position="124"/>
    </location>
</feature>
<feature type="helix" evidence="3">
    <location>
        <begin position="126"/>
        <end position="139"/>
    </location>
</feature>
<feature type="helix" evidence="3">
    <location>
        <begin position="144"/>
        <end position="147"/>
    </location>
</feature>
<feature type="helix" evidence="3">
    <location>
        <begin position="150"/>
        <end position="166"/>
    </location>
</feature>
<sequence>MAILNILEFPDPRLRTIAKPVEVVDDAVRQLIDDMFETMYEAPGIGLAATQVNVHKRIVVMDLSEDKSEPRVFINPEFEPLTEDMDQYQEGCLSVPGFYENVDRPQKVRIKALDRDGNPFEEVAEGLLAVCIQHECDHLNGKLFVDYLSTLKRDRIRKKLEKQHRQQA</sequence>
<evidence type="ECO:0000255" key="1">
    <source>
        <dbReference type="HAMAP-Rule" id="MF_00163"/>
    </source>
</evidence>
<evidence type="ECO:0007829" key="2">
    <source>
        <dbReference type="PDB" id="1IX1"/>
    </source>
</evidence>
<evidence type="ECO:0007829" key="3">
    <source>
        <dbReference type="PDB" id="1N5N"/>
    </source>
</evidence>
<proteinExistence type="evidence at protein level"/>
<organism>
    <name type="scientific">Pseudomonas aeruginosa (strain ATCC 15692 / DSM 22644 / CIP 104116 / JCM 14847 / LMG 12228 / 1C / PRS 101 / PAO1)</name>
    <dbReference type="NCBI Taxonomy" id="208964"/>
    <lineage>
        <taxon>Bacteria</taxon>
        <taxon>Pseudomonadati</taxon>
        <taxon>Pseudomonadota</taxon>
        <taxon>Gammaproteobacteria</taxon>
        <taxon>Pseudomonadales</taxon>
        <taxon>Pseudomonadaceae</taxon>
        <taxon>Pseudomonas</taxon>
    </lineage>
</organism>
<reference key="1">
    <citation type="journal article" date="2000" name="Nature">
        <title>Complete genome sequence of Pseudomonas aeruginosa PAO1, an opportunistic pathogen.</title>
        <authorList>
            <person name="Stover C.K."/>
            <person name="Pham X.-Q.T."/>
            <person name="Erwin A.L."/>
            <person name="Mizoguchi S.D."/>
            <person name="Warrener P."/>
            <person name="Hickey M.J."/>
            <person name="Brinkman F.S.L."/>
            <person name="Hufnagle W.O."/>
            <person name="Kowalik D.J."/>
            <person name="Lagrou M."/>
            <person name="Garber R.L."/>
            <person name="Goltry L."/>
            <person name="Tolentino E."/>
            <person name="Westbrock-Wadman S."/>
            <person name="Yuan Y."/>
            <person name="Brody L.L."/>
            <person name="Coulter S.N."/>
            <person name="Folger K.R."/>
            <person name="Kas A."/>
            <person name="Larbig K."/>
            <person name="Lim R.M."/>
            <person name="Smith K.A."/>
            <person name="Spencer D.H."/>
            <person name="Wong G.K.-S."/>
            <person name="Wu Z."/>
            <person name="Paulsen I.T."/>
            <person name="Reizer J."/>
            <person name="Saier M.H. Jr."/>
            <person name="Hancock R.E.W."/>
            <person name="Lory S."/>
            <person name="Olson M.V."/>
        </authorList>
    </citation>
    <scope>NUCLEOTIDE SEQUENCE [LARGE SCALE GENOMIC DNA]</scope>
    <source>
        <strain>ATCC 15692 / DSM 22644 / CIP 104116 / JCM 14847 / LMG 12228 / 1C / PRS 101 / PAO1</strain>
    </source>
</reference>
<dbReference type="EC" id="3.5.1.88" evidence="1"/>
<dbReference type="EMBL" id="AE004091">
    <property type="protein sequence ID" value="AAG03409.1"/>
    <property type="molecule type" value="Genomic_DNA"/>
</dbReference>
<dbReference type="PIR" id="H83643">
    <property type="entry name" value="H83643"/>
</dbReference>
<dbReference type="RefSeq" id="NP_248709.1">
    <property type="nucleotide sequence ID" value="NC_002516.2"/>
</dbReference>
<dbReference type="RefSeq" id="WP_003107059.1">
    <property type="nucleotide sequence ID" value="NZ_QZGE01000012.1"/>
</dbReference>
<dbReference type="PDB" id="1IX1">
    <property type="method" value="X-ray"/>
    <property type="resolution" value="1.85 A"/>
    <property type="chains" value="A/B=1-168"/>
</dbReference>
<dbReference type="PDB" id="1LRY">
    <property type="method" value="X-ray"/>
    <property type="resolution" value="2.60 A"/>
    <property type="chains" value="A=2-168"/>
</dbReference>
<dbReference type="PDB" id="1N5N">
    <property type="method" value="X-ray"/>
    <property type="resolution" value="1.80 A"/>
    <property type="chains" value="A/B=1-168"/>
</dbReference>
<dbReference type="PDB" id="1S17">
    <property type="method" value="X-ray"/>
    <property type="resolution" value="1.95 A"/>
    <property type="chains" value="A/B=1-168"/>
</dbReference>
<dbReference type="PDB" id="8S1X">
    <property type="method" value="X-ray"/>
    <property type="resolution" value="1.88 A"/>
    <property type="chains" value="A=1-168"/>
</dbReference>
<dbReference type="PDBsum" id="1IX1"/>
<dbReference type="PDBsum" id="1LRY"/>
<dbReference type="PDBsum" id="1N5N"/>
<dbReference type="PDBsum" id="1S17"/>
<dbReference type="PDBsum" id="8S1X"/>
<dbReference type="SMR" id="Q9I7A8"/>
<dbReference type="FunCoup" id="Q9I7A8">
    <property type="interactions" value="582"/>
</dbReference>
<dbReference type="STRING" id="208964.PA0019"/>
<dbReference type="BindingDB" id="Q9I7A8"/>
<dbReference type="ChEMBL" id="CHEMBL1649054"/>
<dbReference type="DrugBank" id="DB02036">
    <property type="generic name" value="2-(3,4-Dihydro-3-Oxo-2h-Benzo[B][1,4]Thiazin-2-Yl)-N-Hydroxyacetamide"/>
</dbReference>
<dbReference type="DrugBank" id="DB04310">
    <property type="generic name" value="2-[(Formyl-Hydroxy-Amino)-Methyl]-Heptanoic Acid [1-(2-Hydroxymethyl-Pyrrolidine-1-Carbonyl)-2-Methyl-Propyl]-Amide"/>
</dbReference>
<dbReference type="DrugBank" id="DB02810">
    <property type="generic name" value="N-(2-Acetamido)Iminodiacetic Acid"/>
</dbReference>
<dbReference type="PaxDb" id="208964-PA0019"/>
<dbReference type="DNASU" id="879306"/>
<dbReference type="GeneID" id="879306"/>
<dbReference type="KEGG" id="pae:PA0019"/>
<dbReference type="PATRIC" id="fig|208964.12.peg.18"/>
<dbReference type="PseudoCAP" id="PA0019"/>
<dbReference type="HOGENOM" id="CLU_061901_2_1_6"/>
<dbReference type="InParanoid" id="Q9I7A8"/>
<dbReference type="OrthoDB" id="9804313at2"/>
<dbReference type="PhylomeDB" id="Q9I7A8"/>
<dbReference type="BioCyc" id="PAER208964:G1FZ6-19-MONOMER"/>
<dbReference type="BRENDA" id="3.5.1.88">
    <property type="organism ID" value="5087"/>
</dbReference>
<dbReference type="EvolutionaryTrace" id="Q9I7A8"/>
<dbReference type="Proteomes" id="UP000002438">
    <property type="component" value="Chromosome"/>
</dbReference>
<dbReference type="GO" id="GO:0046872">
    <property type="term" value="F:metal ion binding"/>
    <property type="evidence" value="ECO:0007669"/>
    <property type="project" value="UniProtKB-KW"/>
</dbReference>
<dbReference type="GO" id="GO:0042586">
    <property type="term" value="F:peptide deformylase activity"/>
    <property type="evidence" value="ECO:0000318"/>
    <property type="project" value="GO_Central"/>
</dbReference>
<dbReference type="GO" id="GO:0043686">
    <property type="term" value="P:co-translational protein modification"/>
    <property type="evidence" value="ECO:0000318"/>
    <property type="project" value="GO_Central"/>
</dbReference>
<dbReference type="GO" id="GO:0006412">
    <property type="term" value="P:translation"/>
    <property type="evidence" value="ECO:0007669"/>
    <property type="project" value="UniProtKB-UniRule"/>
</dbReference>
<dbReference type="CDD" id="cd00487">
    <property type="entry name" value="Pep_deformylase"/>
    <property type="match status" value="1"/>
</dbReference>
<dbReference type="FunFam" id="3.90.45.10:FF:000001">
    <property type="entry name" value="Peptide deformylase"/>
    <property type="match status" value="1"/>
</dbReference>
<dbReference type="Gene3D" id="3.90.45.10">
    <property type="entry name" value="Peptide deformylase"/>
    <property type="match status" value="1"/>
</dbReference>
<dbReference type="HAMAP" id="MF_00163">
    <property type="entry name" value="Pep_deformylase"/>
    <property type="match status" value="1"/>
</dbReference>
<dbReference type="InterPro" id="IPR023635">
    <property type="entry name" value="Peptide_deformylase"/>
</dbReference>
<dbReference type="InterPro" id="IPR036821">
    <property type="entry name" value="Peptide_deformylase_sf"/>
</dbReference>
<dbReference type="NCBIfam" id="TIGR00079">
    <property type="entry name" value="pept_deformyl"/>
    <property type="match status" value="1"/>
</dbReference>
<dbReference type="NCBIfam" id="NF001159">
    <property type="entry name" value="PRK00150.1-3"/>
    <property type="match status" value="1"/>
</dbReference>
<dbReference type="PANTHER" id="PTHR10458">
    <property type="entry name" value="PEPTIDE DEFORMYLASE"/>
    <property type="match status" value="1"/>
</dbReference>
<dbReference type="PANTHER" id="PTHR10458:SF21">
    <property type="entry name" value="PEPTIDE DEFORMYLASE"/>
    <property type="match status" value="1"/>
</dbReference>
<dbReference type="Pfam" id="PF01327">
    <property type="entry name" value="Pep_deformylase"/>
    <property type="match status" value="1"/>
</dbReference>
<dbReference type="PIRSF" id="PIRSF004749">
    <property type="entry name" value="Pep_def"/>
    <property type="match status" value="1"/>
</dbReference>
<dbReference type="PRINTS" id="PR01576">
    <property type="entry name" value="PDEFORMYLASE"/>
</dbReference>
<dbReference type="SUPFAM" id="SSF56420">
    <property type="entry name" value="Peptide deformylase"/>
    <property type="match status" value="1"/>
</dbReference>
<comment type="function">
    <text evidence="1">Removes the formyl group from the N-terminal Met of newly synthesized proteins. Requires at least a dipeptide for an efficient rate of reaction. N-terminal L-methionine is a prerequisite for activity but the enzyme has broad specificity at other positions.</text>
</comment>
<comment type="catalytic activity">
    <reaction evidence="1">
        <text>N-terminal N-formyl-L-methionyl-[peptide] + H2O = N-terminal L-methionyl-[peptide] + formate</text>
        <dbReference type="Rhea" id="RHEA:24420"/>
        <dbReference type="Rhea" id="RHEA-COMP:10639"/>
        <dbReference type="Rhea" id="RHEA-COMP:10640"/>
        <dbReference type="ChEBI" id="CHEBI:15377"/>
        <dbReference type="ChEBI" id="CHEBI:15740"/>
        <dbReference type="ChEBI" id="CHEBI:49298"/>
        <dbReference type="ChEBI" id="CHEBI:64731"/>
        <dbReference type="EC" id="3.5.1.88"/>
    </reaction>
</comment>
<comment type="cofactor">
    <cofactor evidence="1">
        <name>Fe(2+)</name>
        <dbReference type="ChEBI" id="CHEBI:29033"/>
    </cofactor>
    <text evidence="1">Binds 1 Fe(2+) ion.</text>
</comment>
<comment type="similarity">
    <text evidence="1">Belongs to the polypeptide deformylase family.</text>
</comment>
<name>DEF_PSEAE</name>
<protein>
    <recommendedName>
        <fullName evidence="1">Peptide deformylase</fullName>
        <shortName evidence="1">PDF</shortName>
        <ecNumber evidence="1">3.5.1.88</ecNumber>
    </recommendedName>
    <alternativeName>
        <fullName evidence="1">Polypeptide deformylase</fullName>
    </alternativeName>
</protein>
<gene>
    <name evidence="1" type="primary">def</name>
    <name type="ordered locus">PA0019</name>
</gene>